<keyword id="KW-0131">Cell cycle</keyword>
<keyword id="KW-0132">Cell division</keyword>
<keyword id="KW-1003">Cell membrane</keyword>
<keyword id="KW-0133">Cell shape</keyword>
<keyword id="KW-0961">Cell wall biogenesis/degradation</keyword>
<keyword id="KW-0460">Magnesium</keyword>
<keyword id="KW-0472">Membrane</keyword>
<keyword id="KW-0479">Metal-binding</keyword>
<keyword id="KW-0573">Peptidoglycan synthesis</keyword>
<keyword id="KW-0808">Transferase</keyword>
<keyword id="KW-0812">Transmembrane</keyword>
<keyword id="KW-1133">Transmembrane helix</keyword>
<comment type="function">
    <text evidence="1">Catalyzes the initial step of the lipid cycle reactions in the biosynthesis of the cell wall peptidoglycan: transfers peptidoglycan precursor phospho-MurNAc-pentapeptide from UDP-MurNAc-pentapeptide onto the lipid carrier undecaprenyl phosphate, yielding undecaprenyl-pyrophosphoryl-MurNAc-pentapeptide, known as lipid I.</text>
</comment>
<comment type="catalytic activity">
    <reaction evidence="1">
        <text>UDP-N-acetyl-alpha-D-muramoyl-L-alanyl-gamma-D-glutamyl-L-lysyl-D-alanyl-D-alanine + di-trans,octa-cis-undecaprenyl phosphate = Mur2Ac(oyl-L-Ala-gamma-D-Glu-L-Lys-D-Ala-D-Ala)-di-trans,octa-cis-undecaprenyl diphosphate + UMP</text>
        <dbReference type="Rhea" id="RHEA:21920"/>
        <dbReference type="ChEBI" id="CHEBI:57865"/>
        <dbReference type="ChEBI" id="CHEBI:60032"/>
        <dbReference type="ChEBI" id="CHEBI:60392"/>
        <dbReference type="ChEBI" id="CHEBI:70758"/>
        <dbReference type="EC" id="2.7.8.13"/>
    </reaction>
</comment>
<comment type="cofactor">
    <cofactor evidence="1">
        <name>Mg(2+)</name>
        <dbReference type="ChEBI" id="CHEBI:18420"/>
    </cofactor>
</comment>
<comment type="pathway">
    <text evidence="1">Cell wall biogenesis; peptidoglycan biosynthesis.</text>
</comment>
<comment type="subcellular location">
    <subcellularLocation>
        <location evidence="1">Cell membrane</location>
        <topology evidence="1">Multi-pass membrane protein</topology>
    </subcellularLocation>
</comment>
<comment type="similarity">
    <text evidence="1">Belongs to the glycosyltransferase 4 family. MraY subfamily.</text>
</comment>
<reference key="1">
    <citation type="journal article" date="2005" name="Proc. Natl. Acad. Sci. U.S.A.">
        <title>Genome analysis of multiple pathogenic isolates of Streptococcus agalactiae: implications for the microbial 'pan-genome'.</title>
        <authorList>
            <person name="Tettelin H."/>
            <person name="Masignani V."/>
            <person name="Cieslewicz M.J."/>
            <person name="Donati C."/>
            <person name="Medini D."/>
            <person name="Ward N.L."/>
            <person name="Angiuoli S.V."/>
            <person name="Crabtree J."/>
            <person name="Jones A.L."/>
            <person name="Durkin A.S."/>
            <person name="DeBoy R.T."/>
            <person name="Davidsen T.M."/>
            <person name="Mora M."/>
            <person name="Scarselli M."/>
            <person name="Margarit y Ros I."/>
            <person name="Peterson J.D."/>
            <person name="Hauser C.R."/>
            <person name="Sundaram J.P."/>
            <person name="Nelson W.C."/>
            <person name="Madupu R."/>
            <person name="Brinkac L.M."/>
            <person name="Dodson R.J."/>
            <person name="Rosovitz M.J."/>
            <person name="Sullivan S.A."/>
            <person name="Daugherty S.C."/>
            <person name="Haft D.H."/>
            <person name="Selengut J."/>
            <person name="Gwinn M.L."/>
            <person name="Zhou L."/>
            <person name="Zafar N."/>
            <person name="Khouri H."/>
            <person name="Radune D."/>
            <person name="Dimitrov G."/>
            <person name="Watkins K."/>
            <person name="O'Connor K.J."/>
            <person name="Smith S."/>
            <person name="Utterback T.R."/>
            <person name="White O."/>
            <person name="Rubens C.E."/>
            <person name="Grandi G."/>
            <person name="Madoff L.C."/>
            <person name="Kasper D.L."/>
            <person name="Telford J.L."/>
            <person name="Wessels M.R."/>
            <person name="Rappuoli R."/>
            <person name="Fraser C.M."/>
        </authorList>
    </citation>
    <scope>NUCLEOTIDE SEQUENCE [LARGE SCALE GENOMIC DNA]</scope>
    <source>
        <strain>ATCC 27591 / A909 / CDC SS700</strain>
    </source>
</reference>
<evidence type="ECO:0000255" key="1">
    <source>
        <dbReference type="HAMAP-Rule" id="MF_00038"/>
    </source>
</evidence>
<gene>
    <name evidence="1" type="primary">mraY</name>
    <name type="ordered locus">SAK_0360</name>
</gene>
<accession>Q3K391</accession>
<dbReference type="EC" id="2.7.8.13" evidence="1"/>
<dbReference type="EMBL" id="CP000114">
    <property type="protein sequence ID" value="ABA45959.1"/>
    <property type="molecule type" value="Genomic_DNA"/>
</dbReference>
<dbReference type="RefSeq" id="WP_000480020.1">
    <property type="nucleotide sequence ID" value="NC_007432.1"/>
</dbReference>
<dbReference type="SMR" id="Q3K391"/>
<dbReference type="KEGG" id="sak:SAK_0360"/>
<dbReference type="HOGENOM" id="CLU_023982_0_1_9"/>
<dbReference type="UniPathway" id="UPA00219"/>
<dbReference type="GO" id="GO:0005886">
    <property type="term" value="C:plasma membrane"/>
    <property type="evidence" value="ECO:0007669"/>
    <property type="project" value="UniProtKB-SubCell"/>
</dbReference>
<dbReference type="GO" id="GO:0046872">
    <property type="term" value="F:metal ion binding"/>
    <property type="evidence" value="ECO:0007669"/>
    <property type="project" value="UniProtKB-KW"/>
</dbReference>
<dbReference type="GO" id="GO:0008963">
    <property type="term" value="F:phospho-N-acetylmuramoyl-pentapeptide-transferase activity"/>
    <property type="evidence" value="ECO:0007669"/>
    <property type="project" value="UniProtKB-UniRule"/>
</dbReference>
<dbReference type="GO" id="GO:0051301">
    <property type="term" value="P:cell division"/>
    <property type="evidence" value="ECO:0007669"/>
    <property type="project" value="UniProtKB-KW"/>
</dbReference>
<dbReference type="GO" id="GO:0071555">
    <property type="term" value="P:cell wall organization"/>
    <property type="evidence" value="ECO:0007669"/>
    <property type="project" value="UniProtKB-KW"/>
</dbReference>
<dbReference type="GO" id="GO:0009252">
    <property type="term" value="P:peptidoglycan biosynthetic process"/>
    <property type="evidence" value="ECO:0007669"/>
    <property type="project" value="UniProtKB-UniRule"/>
</dbReference>
<dbReference type="GO" id="GO:0008360">
    <property type="term" value="P:regulation of cell shape"/>
    <property type="evidence" value="ECO:0007669"/>
    <property type="project" value="UniProtKB-KW"/>
</dbReference>
<dbReference type="CDD" id="cd06852">
    <property type="entry name" value="GT_MraY"/>
    <property type="match status" value="1"/>
</dbReference>
<dbReference type="HAMAP" id="MF_00038">
    <property type="entry name" value="MraY"/>
    <property type="match status" value="1"/>
</dbReference>
<dbReference type="InterPro" id="IPR000715">
    <property type="entry name" value="Glycosyl_transferase_4"/>
</dbReference>
<dbReference type="InterPro" id="IPR003524">
    <property type="entry name" value="PNAcMuramoyl-5peptid_Trfase"/>
</dbReference>
<dbReference type="InterPro" id="IPR018480">
    <property type="entry name" value="PNAcMuramoyl-5peptid_Trfase_CS"/>
</dbReference>
<dbReference type="NCBIfam" id="TIGR00445">
    <property type="entry name" value="mraY"/>
    <property type="match status" value="1"/>
</dbReference>
<dbReference type="PANTHER" id="PTHR22926">
    <property type="entry name" value="PHOSPHO-N-ACETYLMURAMOYL-PENTAPEPTIDE-TRANSFERASE"/>
    <property type="match status" value="1"/>
</dbReference>
<dbReference type="PANTHER" id="PTHR22926:SF5">
    <property type="entry name" value="PHOSPHO-N-ACETYLMURAMOYL-PENTAPEPTIDE-TRANSFERASE HOMOLOG"/>
    <property type="match status" value="1"/>
</dbReference>
<dbReference type="Pfam" id="PF00953">
    <property type="entry name" value="Glycos_transf_4"/>
    <property type="match status" value="1"/>
</dbReference>
<dbReference type="Pfam" id="PF10555">
    <property type="entry name" value="MraY_sig1"/>
    <property type="match status" value="1"/>
</dbReference>
<dbReference type="PROSITE" id="PS01348">
    <property type="entry name" value="MRAY_2"/>
    <property type="match status" value="1"/>
</dbReference>
<organism>
    <name type="scientific">Streptococcus agalactiae serotype Ia (strain ATCC 27591 / A909 / CDC SS700)</name>
    <dbReference type="NCBI Taxonomy" id="205921"/>
    <lineage>
        <taxon>Bacteria</taxon>
        <taxon>Bacillati</taxon>
        <taxon>Bacillota</taxon>
        <taxon>Bacilli</taxon>
        <taxon>Lactobacillales</taxon>
        <taxon>Streptococcaceae</taxon>
        <taxon>Streptococcus</taxon>
    </lineage>
</organism>
<sequence>MFLSIMAGVIAFVLTVIAIPRFIKFYQLKKIGGQQMHEDVKQHLAKAGTPTMGGTVFLIVALLVSLIFSIILSKENSGNLGATFGILSVVLIYGIIGFLDDFLKIFKQINEGLTPKQKMSLQLIAGLIFYFVHVLPSGTSAINIFGFYLEVGYLYAFFVLFWVVGFSNAVNLTDGIDGLASISVVISLITYGIIAYNQTQFDILLIIVIMIGALLGFFVFNHKPAKVFMGDVGSLALGAMLAAISIALRQEWTLLFIGFVYVFETSSVMLQVAYFKYTKKKTGVGKRIFRMTPFHHHLELGGVSGKGNKWSEWKVDAFLWAIGIFMSAITLAILYL</sequence>
<protein>
    <recommendedName>
        <fullName evidence="1">Phospho-N-acetylmuramoyl-pentapeptide-transferase</fullName>
        <ecNumber evidence="1">2.7.8.13</ecNumber>
    </recommendedName>
    <alternativeName>
        <fullName evidence="1">UDP-MurNAc-pentapeptide phosphotransferase</fullName>
    </alternativeName>
</protein>
<proteinExistence type="inferred from homology"/>
<feature type="chain" id="PRO_0000235488" description="Phospho-N-acetylmuramoyl-pentapeptide-transferase">
    <location>
        <begin position="1"/>
        <end position="336"/>
    </location>
</feature>
<feature type="transmembrane region" description="Helical" evidence="1">
    <location>
        <begin position="3"/>
        <end position="23"/>
    </location>
</feature>
<feature type="transmembrane region" description="Helical" evidence="1">
    <location>
        <begin position="52"/>
        <end position="72"/>
    </location>
</feature>
<feature type="transmembrane region" description="Helical" evidence="1">
    <location>
        <begin position="79"/>
        <end position="99"/>
    </location>
</feature>
<feature type="transmembrane region" description="Helical" evidence="1">
    <location>
        <begin position="123"/>
        <end position="143"/>
    </location>
</feature>
<feature type="transmembrane region" description="Helical" evidence="1">
    <location>
        <begin position="144"/>
        <end position="164"/>
    </location>
</feature>
<feature type="transmembrane region" description="Helical" evidence="1">
    <location>
        <begin position="175"/>
        <end position="195"/>
    </location>
</feature>
<feature type="transmembrane region" description="Helical" evidence="1">
    <location>
        <begin position="201"/>
        <end position="221"/>
    </location>
</feature>
<feature type="transmembrane region" description="Helical" evidence="1">
    <location>
        <begin position="227"/>
        <end position="247"/>
    </location>
</feature>
<feature type="transmembrane region" description="Helical" evidence="1">
    <location>
        <begin position="255"/>
        <end position="275"/>
    </location>
</feature>
<feature type="transmembrane region" description="Helical" evidence="1">
    <location>
        <begin position="315"/>
        <end position="335"/>
    </location>
</feature>
<name>MRAY_STRA1</name>